<name>OLEC_STRMK</name>
<reference key="1">
    <citation type="journal article" date="2008" name="Genome Biol.">
        <title>The complete genome, comparative and functional analysis of Stenotrophomonas maltophilia reveals an organism heavily shielded by drug resistance determinants.</title>
        <authorList>
            <person name="Crossman L.C."/>
            <person name="Gould V.C."/>
            <person name="Dow J.M."/>
            <person name="Vernikos G.S."/>
            <person name="Okazaki A."/>
            <person name="Sebaihia M."/>
            <person name="Saunders D."/>
            <person name="Arrowsmith C."/>
            <person name="Carver T."/>
            <person name="Peters N."/>
            <person name="Adlem E."/>
            <person name="Kerhornou A."/>
            <person name="Lord A."/>
            <person name="Murphy L."/>
            <person name="Seeger K."/>
            <person name="Squares R."/>
            <person name="Rutter S."/>
            <person name="Quail M.A."/>
            <person name="Rajandream M.A."/>
            <person name="Harris D."/>
            <person name="Churcher C."/>
            <person name="Bentley S.D."/>
            <person name="Parkhill J."/>
            <person name="Thomson N.R."/>
            <person name="Avison M.B."/>
        </authorList>
    </citation>
    <scope>NUCLEOTIDE SEQUENCE [LARGE SCALE GENOMIC DNA]</scope>
    <source>
        <strain>K279a</strain>
    </source>
</reference>
<reference key="2">
    <citation type="journal article" date="2016" name="ChemBioChem">
        <title>Stenotrophomonas maltophilia OleC-catalyzed ATP-dependent formation of long-chain Z-olefins from 2-alkyl-3-hydroxyalkanoic acids.</title>
        <authorList>
            <person name="Kancharla P."/>
            <person name="Bonnett S.A."/>
            <person name="Reynolds K.A."/>
        </authorList>
    </citation>
    <scope>FUNCTION</scope>
    <scope>BIOPHYSICOCHEMICAL PROPERTIES</scope>
</reference>
<reference key="3">
    <citation type="journal article" date="2017" name="Biochemistry">
        <title>beta-lactone synthetase found in the olefin biosynthesis pathway.</title>
        <authorList>
            <person name="Christenson J.K."/>
            <person name="Richman J.E."/>
            <person name="Jensen M.R."/>
            <person name="Neufeld J.Y."/>
            <person name="Wilmot C.M."/>
            <person name="Wackett L.P."/>
        </authorList>
    </citation>
    <scope>FUNCTION</scope>
    <scope>CATALYTIC ACTIVITY</scope>
</reference>
<reference key="4">
    <citation type="journal article" date="2010" name="Acta Crystallogr. F">
        <title>Cloning, purification, crystallization and preliminary X-ray diffraction of the OleC protein from Stenotrophomonas maltophilia involved in head-to-head hydrocarbon biosynthesis.</title>
        <authorList>
            <person name="Frias J.A."/>
            <person name="Goblirsch B.R."/>
            <person name="Wackett L.P."/>
            <person name="Wilmot C.M."/>
        </authorList>
    </citation>
    <scope>CRYSTALLIZATION</scope>
    <scope>SUBUNIT</scope>
    <source>
        <strain>ATCC 17679</strain>
    </source>
</reference>
<sequence length="552" mass="58578">MNRPCNIAARLPELARERPDQIAIRCPGRRGAGNGMAAYDVTLDYRQLDARSDAMAAGLAGYGIGRGVRTVVMVRPSPEFFLLMFALFKLGAVPVLVDPGIDRRALKQCLDEAQPEAFIGIPLAHVARLVLRWAPSAARLVTVGRRLGWGGTTLAALERAGAKGGPMLAATDGEDMAAILFTSGSTGVPKGVVYRHRHFVGQIQLLGSAFGMEAGGVDLPTFPPFALFDPALGLTSVIPDMDPTRPAQADPVRLHDAIQRFGVTQLFGSPALMRVLAKHGRPLPTVTRVTSAGAPVPPDVVATIRSLLPADAQFWTPYGATECLPVAVVEGRELERTRAATEAGAGTCVGSVVAPNEVRIIAIDDAPLADWSQARVLAVGEVGEITVAGPTATDSYFNRPQATAAAKIRETLADGSTRVVHRMGDVGYFDAQGRLWFCGRKTQRVETARGPLYTEQVEPVFNTVAGVARTALVGVGAAGAQVPVLCVELLRGQSDSPALQEALRAHAAARTPEAGLQHFLVHPAFPVDIRHNAKIGREKLAVWASAELEKRA</sequence>
<feature type="chain" id="PRO_0000446916" description="Olefin beta-lactone synthetase">
    <location>
        <begin position="1"/>
        <end position="552"/>
    </location>
</feature>
<feature type="binding site" evidence="1">
    <location>
        <begin position="182"/>
        <end position="190"/>
    </location>
    <ligand>
        <name>ATP</name>
        <dbReference type="ChEBI" id="CHEBI:30616"/>
    </ligand>
</feature>
<feature type="binding site" evidence="1">
    <location>
        <begin position="316"/>
        <end position="321"/>
    </location>
    <ligand>
        <name>ATP</name>
        <dbReference type="ChEBI" id="CHEBI:30616"/>
    </ligand>
</feature>
<feature type="binding site" evidence="1">
    <location>
        <position position="425"/>
    </location>
    <ligand>
        <name>ATP</name>
        <dbReference type="ChEBI" id="CHEBI:30616"/>
    </ligand>
</feature>
<feature type="binding site" evidence="1">
    <location>
        <position position="440"/>
    </location>
    <ligand>
        <name>ATP</name>
        <dbReference type="ChEBI" id="CHEBI:30616"/>
    </ligand>
</feature>
<dbReference type="EC" id="6.1.3.1" evidence="4"/>
<dbReference type="EMBL" id="AM743169">
    <property type="protein sequence ID" value="CAQ43816.1"/>
    <property type="molecule type" value="Genomic_DNA"/>
</dbReference>
<dbReference type="RefSeq" id="WP_012478770.1">
    <property type="nucleotide sequence ID" value="NC_010943.1"/>
</dbReference>
<dbReference type="SMR" id="B2FI28"/>
<dbReference type="EnsemblBacteria" id="CAQ43816">
    <property type="protein sequence ID" value="CAQ43816"/>
    <property type="gene ID" value="Smlt0208"/>
</dbReference>
<dbReference type="KEGG" id="sml:Smlt0208"/>
<dbReference type="PATRIC" id="fig|522373.3.peg.199"/>
<dbReference type="eggNOG" id="COG0318">
    <property type="taxonomic scope" value="Bacteria"/>
</dbReference>
<dbReference type="HOGENOM" id="CLU_000022_59_12_6"/>
<dbReference type="Proteomes" id="UP000008840">
    <property type="component" value="Chromosome"/>
</dbReference>
<dbReference type="GO" id="GO:0016878">
    <property type="term" value="F:acid-thiol ligase activity"/>
    <property type="evidence" value="ECO:0007669"/>
    <property type="project" value="UniProtKB-ARBA"/>
</dbReference>
<dbReference type="GO" id="GO:0005524">
    <property type="term" value="F:ATP binding"/>
    <property type="evidence" value="ECO:0007669"/>
    <property type="project" value="UniProtKB-KW"/>
</dbReference>
<dbReference type="CDD" id="cd05910">
    <property type="entry name" value="FACL_like_1"/>
    <property type="match status" value="1"/>
</dbReference>
<dbReference type="Gene3D" id="3.30.300.30">
    <property type="match status" value="1"/>
</dbReference>
<dbReference type="Gene3D" id="3.40.50.12780">
    <property type="entry name" value="N-terminal domain of ligase-like"/>
    <property type="match status" value="1"/>
</dbReference>
<dbReference type="InterPro" id="IPR045851">
    <property type="entry name" value="AMP-bd_C_sf"/>
</dbReference>
<dbReference type="InterPro" id="IPR020845">
    <property type="entry name" value="AMP-binding_CS"/>
</dbReference>
<dbReference type="InterPro" id="IPR000873">
    <property type="entry name" value="AMP-dep_synth/lig_dom"/>
</dbReference>
<dbReference type="InterPro" id="IPR042099">
    <property type="entry name" value="ANL_N_sf"/>
</dbReference>
<dbReference type="InterPro" id="IPR050237">
    <property type="entry name" value="ATP-dep_AMP-bd_enzyme"/>
</dbReference>
<dbReference type="InterPro" id="IPR054888">
    <property type="entry name" value="OlefBLtnSyn"/>
</dbReference>
<dbReference type="NCBIfam" id="NF045786">
    <property type="entry name" value="OlefBLtnSynXan"/>
    <property type="match status" value="1"/>
</dbReference>
<dbReference type="NCBIfam" id="NF006754">
    <property type="entry name" value="PRK09274.1"/>
    <property type="match status" value="1"/>
</dbReference>
<dbReference type="PANTHER" id="PTHR43767">
    <property type="entry name" value="LONG-CHAIN-FATTY-ACID--COA LIGASE"/>
    <property type="match status" value="1"/>
</dbReference>
<dbReference type="PANTHER" id="PTHR43767:SF1">
    <property type="entry name" value="NONRIBOSOMAL PEPTIDE SYNTHASE PES1 (EUROFUNG)-RELATED"/>
    <property type="match status" value="1"/>
</dbReference>
<dbReference type="Pfam" id="PF00501">
    <property type="entry name" value="AMP-binding"/>
    <property type="match status" value="1"/>
</dbReference>
<dbReference type="SUPFAM" id="SSF56801">
    <property type="entry name" value="Acetyl-CoA synthetase-like"/>
    <property type="match status" value="1"/>
</dbReference>
<dbReference type="PROSITE" id="PS00455">
    <property type="entry name" value="AMP_BINDING"/>
    <property type="match status" value="1"/>
</dbReference>
<gene>
    <name evidence="5" type="primary">oleC</name>
    <name evidence="7" type="ordered locus">Smlt0208</name>
</gene>
<comment type="function">
    <text evidence="3 4">Involved in olefin biosynthesis (PubMed:27238740, PubMed:28029240). Catalyzes the conversion of beta-hydroxy acid substrates to beta-lactones in the presence of ATP (PubMed:28029240). Can use all four stereoisomers of 2-hexyl-3-hydroxydecanoic acid (PubMed:27238740).</text>
</comment>
<comment type="catalytic activity">
    <reaction evidence="4">
        <text>a (2R,3S)-2-alkyl-3-hydroxyalkanoate + ATP = a cis-3-alkyl-4-alkyloxetan-2-one + AMP + diphosphate</text>
        <dbReference type="Rhea" id="RHEA:23060"/>
        <dbReference type="ChEBI" id="CHEBI:30616"/>
        <dbReference type="ChEBI" id="CHEBI:33019"/>
        <dbReference type="ChEBI" id="CHEBI:138340"/>
        <dbReference type="ChEBI" id="CHEBI:138483"/>
        <dbReference type="ChEBI" id="CHEBI:456215"/>
        <dbReference type="EC" id="6.1.3.1"/>
    </reaction>
    <physiologicalReaction direction="left-to-right" evidence="4">
        <dbReference type="Rhea" id="RHEA:23061"/>
    </physiologicalReaction>
</comment>
<comment type="biophysicochemical properties">
    <kinetics>
        <KM evidence="3">8 uM for (2R,3S)-2-hexyl-3-hydroxydecanoic acid</KM>
        <KM evidence="3">8.8 uM for (2S,3S)-2-hexyl-3-hydroxydecanoic acid</KM>
        <KM evidence="3">5.14 uM for (2S,3R)-2-hexyl-3-hydroxydecanoic acid</KM>
        <KM evidence="3">7.12 uM for (2R,3R)-2-hexyl-3-hydroxydecanoic acid</KM>
        <KM evidence="3">6.23 uM for ATP</KM>
    </kinetics>
</comment>
<comment type="subunit">
    <text evidence="2">Monomer.</text>
</comment>
<comment type="similarity">
    <text evidence="6">Belongs to the ATP-dependent AMP-binding enzyme family.</text>
</comment>
<evidence type="ECO:0000250" key="1">
    <source>
        <dbReference type="UniProtKB" id="Q08AH3"/>
    </source>
</evidence>
<evidence type="ECO:0000269" key="2">
    <source>
    </source>
</evidence>
<evidence type="ECO:0000269" key="3">
    <source>
    </source>
</evidence>
<evidence type="ECO:0000269" key="4">
    <source>
    </source>
</evidence>
<evidence type="ECO:0000303" key="5">
    <source>
    </source>
</evidence>
<evidence type="ECO:0000305" key="6"/>
<evidence type="ECO:0000312" key="7">
    <source>
        <dbReference type="EMBL" id="CAQ43816.1"/>
    </source>
</evidence>
<protein>
    <recommendedName>
        <fullName evidence="6">Olefin beta-lactone synthetase</fullName>
        <ecNumber evidence="4">6.1.3.1</ecNumber>
    </recommendedName>
</protein>
<keyword id="KW-0067">ATP-binding</keyword>
<keyword id="KW-0436">Ligase</keyword>
<keyword id="KW-0547">Nucleotide-binding</keyword>
<keyword id="KW-1185">Reference proteome</keyword>
<organism>
    <name type="scientific">Stenotrophomonas maltophilia (strain K279a)</name>
    <dbReference type="NCBI Taxonomy" id="522373"/>
    <lineage>
        <taxon>Bacteria</taxon>
        <taxon>Pseudomonadati</taxon>
        <taxon>Pseudomonadota</taxon>
        <taxon>Gammaproteobacteria</taxon>
        <taxon>Lysobacterales</taxon>
        <taxon>Lysobacteraceae</taxon>
        <taxon>Stenotrophomonas</taxon>
        <taxon>Stenotrophomonas maltophilia group</taxon>
    </lineage>
</organism>
<accession>B2FI28</accession>
<proteinExistence type="evidence at protein level"/>